<gene>
    <name evidence="1" type="primary">pyrB</name>
    <name type="ordered locus">NMB0106</name>
</gene>
<comment type="function">
    <text evidence="1">Catalyzes the condensation of carbamoyl phosphate and aspartate to form carbamoyl aspartate and inorganic phosphate, the committed step in the de novo pyrimidine nucleotide biosynthesis pathway.</text>
</comment>
<comment type="catalytic activity">
    <reaction evidence="1">
        <text>carbamoyl phosphate + L-aspartate = N-carbamoyl-L-aspartate + phosphate + H(+)</text>
        <dbReference type="Rhea" id="RHEA:20013"/>
        <dbReference type="ChEBI" id="CHEBI:15378"/>
        <dbReference type="ChEBI" id="CHEBI:29991"/>
        <dbReference type="ChEBI" id="CHEBI:32814"/>
        <dbReference type="ChEBI" id="CHEBI:43474"/>
        <dbReference type="ChEBI" id="CHEBI:58228"/>
        <dbReference type="EC" id="2.1.3.2"/>
    </reaction>
</comment>
<comment type="pathway">
    <text evidence="1">Pyrimidine metabolism; UMP biosynthesis via de novo pathway; (S)-dihydroorotate from bicarbonate: step 2/3.</text>
</comment>
<comment type="subunit">
    <text evidence="1">Heterododecamer (2C3:3R2) of six catalytic PyrB chains organized as two trimers (C3), and six regulatory PyrI chains organized as three dimers (R2).</text>
</comment>
<comment type="similarity">
    <text evidence="1">Belongs to the aspartate/ornithine carbamoyltransferase superfamily. ATCase family.</text>
</comment>
<organism>
    <name type="scientific">Neisseria meningitidis serogroup B (strain ATCC BAA-335 / MC58)</name>
    <dbReference type="NCBI Taxonomy" id="122586"/>
    <lineage>
        <taxon>Bacteria</taxon>
        <taxon>Pseudomonadati</taxon>
        <taxon>Pseudomonadota</taxon>
        <taxon>Betaproteobacteria</taxon>
        <taxon>Neisseriales</taxon>
        <taxon>Neisseriaceae</taxon>
        <taxon>Neisseria</taxon>
    </lineage>
</organism>
<evidence type="ECO:0000255" key="1">
    <source>
        <dbReference type="HAMAP-Rule" id="MF_00001"/>
    </source>
</evidence>
<protein>
    <recommendedName>
        <fullName evidence="1">Aspartate carbamoyltransferase catalytic subunit</fullName>
        <ecNumber evidence="1">2.1.3.2</ecNumber>
    </recommendedName>
    <alternativeName>
        <fullName evidence="1">Aspartate transcarbamylase</fullName>
        <shortName evidence="1">ATCase</shortName>
    </alternativeName>
</protein>
<accession>P65616</accession>
<accession>Q9JQU5</accession>
<sequence>MPNPLYRQHIISISDLSREQLECLLQTALKLKAHPRGDLLEGKLIGSCFFEPSTRTRLSFETAVQRLGGKVIGFSDGANTSAKKGETLADTARIISGYTDAIIQRHPKDGAARVAAEFSRVPVINAGDGTNQHPSQTLLDLVTIYETQGRLDKLKIAMAGDLKYGRTVHSLCQALKRWNCEFAFVSPPSLAMPDYITEELDEAGCRYRILGSLEEAAEWADILYMTRVQRERFDEQEFAKIQGKFNLEASMLARAKPNLRVLHPLPRVDEIHPDVDATPHAYYFEQATNGVYARMAILSLVLNEEV</sequence>
<proteinExistence type="inferred from homology"/>
<dbReference type="EC" id="2.1.3.2" evidence="1"/>
<dbReference type="EMBL" id="AE002098">
    <property type="protein sequence ID" value="AAF40565.1"/>
    <property type="molecule type" value="Genomic_DNA"/>
</dbReference>
<dbReference type="PIR" id="A81238">
    <property type="entry name" value="A81238"/>
</dbReference>
<dbReference type="RefSeq" id="NP_273164.1">
    <property type="nucleotide sequence ID" value="NC_003112.2"/>
</dbReference>
<dbReference type="RefSeq" id="WP_002215336.1">
    <property type="nucleotide sequence ID" value="NC_003112.2"/>
</dbReference>
<dbReference type="SMR" id="P65616"/>
<dbReference type="FunCoup" id="P65616">
    <property type="interactions" value="522"/>
</dbReference>
<dbReference type="STRING" id="122586.NMB0106"/>
<dbReference type="PaxDb" id="122586-NMB0106"/>
<dbReference type="GeneID" id="93387178"/>
<dbReference type="KEGG" id="nme:NMB0106"/>
<dbReference type="PATRIC" id="fig|122586.8.peg.146"/>
<dbReference type="HOGENOM" id="CLU_043846_1_2_4"/>
<dbReference type="InParanoid" id="P65616"/>
<dbReference type="OrthoDB" id="9774690at2"/>
<dbReference type="UniPathway" id="UPA00070">
    <property type="reaction ID" value="UER00116"/>
</dbReference>
<dbReference type="Proteomes" id="UP000000425">
    <property type="component" value="Chromosome"/>
</dbReference>
<dbReference type="GO" id="GO:0016597">
    <property type="term" value="F:amino acid binding"/>
    <property type="evidence" value="ECO:0007669"/>
    <property type="project" value="InterPro"/>
</dbReference>
<dbReference type="GO" id="GO:0004070">
    <property type="term" value="F:aspartate carbamoyltransferase activity"/>
    <property type="evidence" value="ECO:0007669"/>
    <property type="project" value="UniProtKB-UniRule"/>
</dbReference>
<dbReference type="GO" id="GO:0006207">
    <property type="term" value="P:'de novo' pyrimidine nucleobase biosynthetic process"/>
    <property type="evidence" value="ECO:0007669"/>
    <property type="project" value="InterPro"/>
</dbReference>
<dbReference type="GO" id="GO:0044205">
    <property type="term" value="P:'de novo' UMP biosynthetic process"/>
    <property type="evidence" value="ECO:0007669"/>
    <property type="project" value="UniProtKB-UniRule"/>
</dbReference>
<dbReference type="GO" id="GO:0006520">
    <property type="term" value="P:amino acid metabolic process"/>
    <property type="evidence" value="ECO:0007669"/>
    <property type="project" value="InterPro"/>
</dbReference>
<dbReference type="FunFam" id="3.40.50.1370:FF:000001">
    <property type="entry name" value="Aspartate carbamoyltransferase"/>
    <property type="match status" value="1"/>
</dbReference>
<dbReference type="FunFam" id="3.40.50.1370:FF:000002">
    <property type="entry name" value="Aspartate carbamoyltransferase 2"/>
    <property type="match status" value="1"/>
</dbReference>
<dbReference type="Gene3D" id="3.40.50.1370">
    <property type="entry name" value="Aspartate/ornithine carbamoyltransferase"/>
    <property type="match status" value="2"/>
</dbReference>
<dbReference type="HAMAP" id="MF_00001">
    <property type="entry name" value="Asp_carb_tr"/>
    <property type="match status" value="1"/>
</dbReference>
<dbReference type="InterPro" id="IPR006132">
    <property type="entry name" value="Asp/Orn_carbamoyltranf_P-bd"/>
</dbReference>
<dbReference type="InterPro" id="IPR006130">
    <property type="entry name" value="Asp/Orn_carbamoylTrfase"/>
</dbReference>
<dbReference type="InterPro" id="IPR036901">
    <property type="entry name" value="Asp/Orn_carbamoylTrfase_sf"/>
</dbReference>
<dbReference type="InterPro" id="IPR002082">
    <property type="entry name" value="Asp_carbamoyltransf"/>
</dbReference>
<dbReference type="InterPro" id="IPR006131">
    <property type="entry name" value="Asp_carbamoyltransf_Asp/Orn-bd"/>
</dbReference>
<dbReference type="NCBIfam" id="TIGR00670">
    <property type="entry name" value="asp_carb_tr"/>
    <property type="match status" value="1"/>
</dbReference>
<dbReference type="NCBIfam" id="NF002032">
    <property type="entry name" value="PRK00856.1"/>
    <property type="match status" value="1"/>
</dbReference>
<dbReference type="PANTHER" id="PTHR45753:SF6">
    <property type="entry name" value="ASPARTATE CARBAMOYLTRANSFERASE"/>
    <property type="match status" value="1"/>
</dbReference>
<dbReference type="PANTHER" id="PTHR45753">
    <property type="entry name" value="ORNITHINE CARBAMOYLTRANSFERASE, MITOCHONDRIAL"/>
    <property type="match status" value="1"/>
</dbReference>
<dbReference type="Pfam" id="PF00185">
    <property type="entry name" value="OTCace"/>
    <property type="match status" value="1"/>
</dbReference>
<dbReference type="Pfam" id="PF02729">
    <property type="entry name" value="OTCace_N"/>
    <property type="match status" value="1"/>
</dbReference>
<dbReference type="PRINTS" id="PR00100">
    <property type="entry name" value="AOTCASE"/>
</dbReference>
<dbReference type="PRINTS" id="PR00101">
    <property type="entry name" value="ATCASE"/>
</dbReference>
<dbReference type="SUPFAM" id="SSF53671">
    <property type="entry name" value="Aspartate/ornithine carbamoyltransferase"/>
    <property type="match status" value="1"/>
</dbReference>
<dbReference type="PROSITE" id="PS00097">
    <property type="entry name" value="CARBAMOYLTRANSFERASE"/>
    <property type="match status" value="1"/>
</dbReference>
<reference key="1">
    <citation type="journal article" date="2000" name="Science">
        <title>Complete genome sequence of Neisseria meningitidis serogroup B strain MC58.</title>
        <authorList>
            <person name="Tettelin H."/>
            <person name="Saunders N.J."/>
            <person name="Heidelberg J.F."/>
            <person name="Jeffries A.C."/>
            <person name="Nelson K.E."/>
            <person name="Eisen J.A."/>
            <person name="Ketchum K.A."/>
            <person name="Hood D.W."/>
            <person name="Peden J.F."/>
            <person name="Dodson R.J."/>
            <person name="Nelson W.C."/>
            <person name="Gwinn M.L."/>
            <person name="DeBoy R.T."/>
            <person name="Peterson J.D."/>
            <person name="Hickey E.K."/>
            <person name="Haft D.H."/>
            <person name="Salzberg S.L."/>
            <person name="White O."/>
            <person name="Fleischmann R.D."/>
            <person name="Dougherty B.A."/>
            <person name="Mason T.M."/>
            <person name="Ciecko A."/>
            <person name="Parksey D.S."/>
            <person name="Blair E."/>
            <person name="Cittone H."/>
            <person name="Clark E.B."/>
            <person name="Cotton M.D."/>
            <person name="Utterback T.R."/>
            <person name="Khouri H.M."/>
            <person name="Qin H."/>
            <person name="Vamathevan J.J."/>
            <person name="Gill J."/>
            <person name="Scarlato V."/>
            <person name="Masignani V."/>
            <person name="Pizza M."/>
            <person name="Grandi G."/>
            <person name="Sun L."/>
            <person name="Smith H.O."/>
            <person name="Fraser C.M."/>
            <person name="Moxon E.R."/>
            <person name="Rappuoli R."/>
            <person name="Venter J.C."/>
        </authorList>
    </citation>
    <scope>NUCLEOTIDE SEQUENCE [LARGE SCALE GENOMIC DNA]</scope>
    <source>
        <strain>ATCC BAA-335 / MC58</strain>
    </source>
</reference>
<keyword id="KW-0665">Pyrimidine biosynthesis</keyword>
<keyword id="KW-1185">Reference proteome</keyword>
<keyword id="KW-0808">Transferase</keyword>
<name>PYRB_NEIMB</name>
<feature type="chain" id="PRO_0000113165" description="Aspartate carbamoyltransferase catalytic subunit">
    <location>
        <begin position="1"/>
        <end position="306"/>
    </location>
</feature>
<feature type="binding site" evidence="1">
    <location>
        <position position="55"/>
    </location>
    <ligand>
        <name>carbamoyl phosphate</name>
        <dbReference type="ChEBI" id="CHEBI:58228"/>
    </ligand>
</feature>
<feature type="binding site" evidence="1">
    <location>
        <position position="56"/>
    </location>
    <ligand>
        <name>carbamoyl phosphate</name>
        <dbReference type="ChEBI" id="CHEBI:58228"/>
    </ligand>
</feature>
<feature type="binding site" evidence="1">
    <location>
        <position position="84"/>
    </location>
    <ligand>
        <name>L-aspartate</name>
        <dbReference type="ChEBI" id="CHEBI:29991"/>
    </ligand>
</feature>
<feature type="binding site" evidence="1">
    <location>
        <position position="105"/>
    </location>
    <ligand>
        <name>carbamoyl phosphate</name>
        <dbReference type="ChEBI" id="CHEBI:58228"/>
    </ligand>
</feature>
<feature type="binding site" evidence="1">
    <location>
        <position position="133"/>
    </location>
    <ligand>
        <name>carbamoyl phosphate</name>
        <dbReference type="ChEBI" id="CHEBI:58228"/>
    </ligand>
</feature>
<feature type="binding site" evidence="1">
    <location>
        <position position="136"/>
    </location>
    <ligand>
        <name>carbamoyl phosphate</name>
        <dbReference type="ChEBI" id="CHEBI:58228"/>
    </ligand>
</feature>
<feature type="binding site" evidence="1">
    <location>
        <position position="166"/>
    </location>
    <ligand>
        <name>L-aspartate</name>
        <dbReference type="ChEBI" id="CHEBI:29991"/>
    </ligand>
</feature>
<feature type="binding site" evidence="1">
    <location>
        <position position="227"/>
    </location>
    <ligand>
        <name>L-aspartate</name>
        <dbReference type="ChEBI" id="CHEBI:29991"/>
    </ligand>
</feature>
<feature type="binding site" evidence="1">
    <location>
        <position position="265"/>
    </location>
    <ligand>
        <name>carbamoyl phosphate</name>
        <dbReference type="ChEBI" id="CHEBI:58228"/>
    </ligand>
</feature>
<feature type="binding site" evidence="1">
    <location>
        <position position="266"/>
    </location>
    <ligand>
        <name>carbamoyl phosphate</name>
        <dbReference type="ChEBI" id="CHEBI:58228"/>
    </ligand>
</feature>